<dbReference type="EC" id="3.1.2.-"/>
<dbReference type="EC" id="3.1.2.22" evidence="1"/>
<dbReference type="EMBL" id="U97148">
    <property type="protein sequence ID" value="AAC63432.1"/>
    <property type="molecule type" value="mRNA"/>
</dbReference>
<dbReference type="RefSeq" id="NP_001103287.1">
    <property type="nucleotide sequence ID" value="NM_001109817.1"/>
</dbReference>
<dbReference type="SMR" id="O77821"/>
<dbReference type="FunCoup" id="O77821">
    <property type="interactions" value="2049"/>
</dbReference>
<dbReference type="STRING" id="9986.ENSOCUP00000031666"/>
<dbReference type="ESTHER" id="rabit-lypla1">
    <property type="family name" value="LYsophospholipase_carboxylesterase"/>
</dbReference>
<dbReference type="PaxDb" id="9986-ENSOCUP00000005836"/>
<dbReference type="GeneID" id="100125992"/>
<dbReference type="KEGG" id="ocu:100125992"/>
<dbReference type="CTD" id="10434"/>
<dbReference type="eggNOG" id="KOG2112">
    <property type="taxonomic scope" value="Eukaryota"/>
</dbReference>
<dbReference type="InParanoid" id="O77821"/>
<dbReference type="OrthoDB" id="2418081at2759"/>
<dbReference type="Proteomes" id="UP000001811">
    <property type="component" value="Unplaced"/>
</dbReference>
<dbReference type="GO" id="GO:0005737">
    <property type="term" value="C:cytoplasm"/>
    <property type="evidence" value="ECO:0000250"/>
    <property type="project" value="UniProtKB"/>
</dbReference>
<dbReference type="GO" id="GO:0005783">
    <property type="term" value="C:endoplasmic reticulum"/>
    <property type="evidence" value="ECO:0000250"/>
    <property type="project" value="UniProtKB"/>
</dbReference>
<dbReference type="GO" id="GO:0031965">
    <property type="term" value="C:nuclear membrane"/>
    <property type="evidence" value="ECO:0000250"/>
    <property type="project" value="UniProtKB"/>
</dbReference>
<dbReference type="GO" id="GO:0005886">
    <property type="term" value="C:plasma membrane"/>
    <property type="evidence" value="ECO:0000250"/>
    <property type="project" value="UniProtKB"/>
</dbReference>
<dbReference type="GO" id="GO:0004622">
    <property type="term" value="F:lysophospholipase activity"/>
    <property type="evidence" value="ECO:0000250"/>
    <property type="project" value="UniProtKB"/>
</dbReference>
<dbReference type="GO" id="GO:0008474">
    <property type="term" value="F:palmitoyl-(protein) hydrolase activity"/>
    <property type="evidence" value="ECO:0000250"/>
    <property type="project" value="UniProtKB"/>
</dbReference>
<dbReference type="GO" id="GO:0004620">
    <property type="term" value="F:phospholipase activity"/>
    <property type="evidence" value="ECO:0000250"/>
    <property type="project" value="UniProtKB"/>
</dbReference>
<dbReference type="GO" id="GO:0006631">
    <property type="term" value="P:fatty acid metabolic process"/>
    <property type="evidence" value="ECO:0007669"/>
    <property type="project" value="UniProtKB-KW"/>
</dbReference>
<dbReference type="GO" id="GO:0002084">
    <property type="term" value="P:protein depalmitoylation"/>
    <property type="evidence" value="ECO:0000250"/>
    <property type="project" value="UniProtKB"/>
</dbReference>
<dbReference type="FunFam" id="3.40.50.1820:FF:000010">
    <property type="entry name" value="Acyl-protein thioesterase 2"/>
    <property type="match status" value="1"/>
</dbReference>
<dbReference type="Gene3D" id="3.40.50.1820">
    <property type="entry name" value="alpha/beta hydrolase"/>
    <property type="match status" value="1"/>
</dbReference>
<dbReference type="InterPro" id="IPR029058">
    <property type="entry name" value="AB_hydrolase_fold"/>
</dbReference>
<dbReference type="InterPro" id="IPR050565">
    <property type="entry name" value="LYPA1-2/EST-like"/>
</dbReference>
<dbReference type="InterPro" id="IPR003140">
    <property type="entry name" value="PLipase/COase/thioEstase"/>
</dbReference>
<dbReference type="PANTHER" id="PTHR10655:SF22">
    <property type="entry name" value="ACYL-PROTEIN THIOESTERASE 1"/>
    <property type="match status" value="1"/>
</dbReference>
<dbReference type="PANTHER" id="PTHR10655">
    <property type="entry name" value="LYSOPHOSPHOLIPASE-RELATED"/>
    <property type="match status" value="1"/>
</dbReference>
<dbReference type="Pfam" id="PF02230">
    <property type="entry name" value="Abhydrolase_2"/>
    <property type="match status" value="1"/>
</dbReference>
<dbReference type="SUPFAM" id="SSF53474">
    <property type="entry name" value="alpha/beta-Hydrolases"/>
    <property type="match status" value="1"/>
</dbReference>
<gene>
    <name type="primary">LYPLA1</name>
</gene>
<reference key="1">
    <citation type="journal article" date="1998" name="J. Am. Soc. Nephrol.">
        <title>cDNA cloning and expression of a novel family of enzymes with calcium-independent phospholipase A2 and lysophospholipase activities.</title>
        <authorList>
            <person name="Portilla D."/>
            <person name="Crew M.D."/>
            <person name="Grant D."/>
            <person name="Serrero G."/>
            <person name="Bates L.M."/>
            <person name="Dai G."/>
            <person name="Sasner M."/>
            <person name="Cheng J."/>
            <person name="Buonanno A."/>
        </authorList>
    </citation>
    <scope>NUCLEOTIDE SEQUENCE [MRNA]</scope>
    <scope>PROTEIN SEQUENCE OF 98-103; 150-161 AND 191-201</scope>
    <source>
        <tissue>Kidney</tissue>
    </source>
</reference>
<feature type="chain" id="PRO_0000102269" description="Acyl-protein thioesterase 1">
    <location>
        <begin position="1"/>
        <end position="230"/>
    </location>
</feature>
<feature type="active site" description="Charge relay system" evidence="1">
    <location>
        <position position="119"/>
    </location>
</feature>
<feature type="active site" description="Charge relay system" evidence="1">
    <location>
        <position position="174"/>
    </location>
</feature>
<feature type="active site" description="Charge relay system" evidence="1">
    <location>
        <position position="208"/>
    </location>
</feature>
<feature type="modified residue" description="N6-acetyllysine" evidence="3">
    <location>
        <position position="224"/>
    </location>
</feature>
<organism>
    <name type="scientific">Oryctolagus cuniculus</name>
    <name type="common">Rabbit</name>
    <dbReference type="NCBI Taxonomy" id="9986"/>
    <lineage>
        <taxon>Eukaryota</taxon>
        <taxon>Metazoa</taxon>
        <taxon>Chordata</taxon>
        <taxon>Craniata</taxon>
        <taxon>Vertebrata</taxon>
        <taxon>Euteleostomi</taxon>
        <taxon>Mammalia</taxon>
        <taxon>Eutheria</taxon>
        <taxon>Euarchontoglires</taxon>
        <taxon>Glires</taxon>
        <taxon>Lagomorpha</taxon>
        <taxon>Leporidae</taxon>
        <taxon>Oryctolagus</taxon>
    </lineage>
</organism>
<sequence>MCGNNMSAPMPAVVPAARKATAAVIFLHGLGDTGHGWAEAFAGIKSPHIKYICPHAPVMPVTLNMNMAMPSWFDIVGLSPDSQEDESGIKQAAETVKALIDQEVKNGIPSNRIILGGFSQGGALSLYTALTTQQKLAGVTALSCWLPLRASFSQGPINSANRDISVLQCHGDCDPLVPLMFGSLTVERLKALINPANVTFKIYEGMMHSSCQQEMMDVKHFIDKLLPPID</sequence>
<name>LYPA1_RABIT</name>
<keyword id="KW-0007">Acetylation</keyword>
<keyword id="KW-1003">Cell membrane</keyword>
<keyword id="KW-0963">Cytoplasm</keyword>
<keyword id="KW-0903">Direct protein sequencing</keyword>
<keyword id="KW-0256">Endoplasmic reticulum</keyword>
<keyword id="KW-0276">Fatty acid metabolism</keyword>
<keyword id="KW-0378">Hydrolase</keyword>
<keyword id="KW-0443">Lipid metabolism</keyword>
<keyword id="KW-0472">Membrane</keyword>
<keyword id="KW-0539">Nucleus</keyword>
<keyword id="KW-1185">Reference proteome</keyword>
<proteinExistence type="evidence at protein level"/>
<comment type="function">
    <text evidence="1 2">Acts as an acyl-protein thioesterase. Hydrolyzes fatty acids from S-acylated cysteine residues in proteins such as trimeric G alpha proteins or HRAS. Acts as a palmitoyl thioesterase that catalyzes depalmitoylation of proteins, such as ADRB2, KCNMA1 and SQSTM1. Acts as a negative regulator of autophagy by mediating palmitoylation of SQSTM1, decreasing affinity between SQSTM1 and ATG8 proteins and recruitment of ubiquitinated cargo proteins to autophagosomes. Acts as a lysophospholipase and hydrolyzes lysophosphatidylcholine (lyso-PC) (By similarity). Also hydrolyzes lysophosphatidylethanolamine (lyso-PE), lysophosphatidylinositol (lyso-PI) and lysophosphatidylserine (lyso-PS) (By similarity). Has much higher thioesterase activity than lysophospholipase activity. Contributes to the production of lysophosphatidic acid (LPA) during blood coagulation by recognizing and cleaving plasma phospholipids to generate lysophospholipids which in turn act as substrates for ENPP2 to produce LPA (By similarity).</text>
</comment>
<comment type="catalytic activity">
    <reaction evidence="1">
        <text>S-hexadecanoyl-L-cysteinyl-[protein] + H2O = L-cysteinyl-[protein] + hexadecanoate + H(+)</text>
        <dbReference type="Rhea" id="RHEA:19233"/>
        <dbReference type="Rhea" id="RHEA-COMP:10131"/>
        <dbReference type="Rhea" id="RHEA-COMP:11032"/>
        <dbReference type="ChEBI" id="CHEBI:7896"/>
        <dbReference type="ChEBI" id="CHEBI:15377"/>
        <dbReference type="ChEBI" id="CHEBI:15378"/>
        <dbReference type="ChEBI" id="CHEBI:29950"/>
        <dbReference type="ChEBI" id="CHEBI:74151"/>
        <dbReference type="EC" id="3.1.2.22"/>
    </reaction>
</comment>
<comment type="catalytic activity">
    <reaction evidence="1">
        <text>1-hexadecanoyl-sn-glycero-3-phosphocholine + H2O = sn-glycerol 3-phosphocholine + hexadecanoate + H(+)</text>
        <dbReference type="Rhea" id="RHEA:40435"/>
        <dbReference type="ChEBI" id="CHEBI:7896"/>
        <dbReference type="ChEBI" id="CHEBI:15377"/>
        <dbReference type="ChEBI" id="CHEBI:15378"/>
        <dbReference type="ChEBI" id="CHEBI:16870"/>
        <dbReference type="ChEBI" id="CHEBI:72998"/>
    </reaction>
    <physiologicalReaction direction="left-to-right" evidence="1">
        <dbReference type="Rhea" id="RHEA:40436"/>
    </physiologicalReaction>
</comment>
<comment type="catalytic activity">
    <reaction evidence="1">
        <text>a 1-(9Z-octadecenoyl)-2-acyl-sn-glycero-3-phosphocholine + H2O = a 2-acyl-sn-glycero-3-phosphocholine + (9Z)-octadecenoate + H(+)</text>
        <dbReference type="Rhea" id="RHEA:41720"/>
        <dbReference type="ChEBI" id="CHEBI:15377"/>
        <dbReference type="ChEBI" id="CHEBI:15378"/>
        <dbReference type="ChEBI" id="CHEBI:30823"/>
        <dbReference type="ChEBI" id="CHEBI:57875"/>
        <dbReference type="ChEBI" id="CHEBI:78421"/>
    </reaction>
    <physiologicalReaction direction="left-to-right" evidence="1">
        <dbReference type="Rhea" id="RHEA:41721"/>
    </physiologicalReaction>
</comment>
<comment type="subunit">
    <text evidence="1">Homodimer.</text>
</comment>
<comment type="subcellular location">
    <subcellularLocation>
        <location evidence="1">Cytoplasm</location>
    </subcellularLocation>
    <subcellularLocation>
        <location evidence="1">Cell membrane</location>
    </subcellularLocation>
    <subcellularLocation>
        <location evidence="1">Nucleus membrane</location>
    </subcellularLocation>
    <subcellularLocation>
        <location evidence="1">Endoplasmic reticulum</location>
    </subcellularLocation>
    <text evidence="1">Shows predominantly a cytoplasmic localization with a weak expression in the cell membrane, nuclear membrane and endoplasmic reticulum.</text>
</comment>
<comment type="similarity">
    <text evidence="4">Belongs to the AB hydrolase superfamily. AB hydrolase 2 family.</text>
</comment>
<accession>O77821</accession>
<evidence type="ECO:0000250" key="1">
    <source>
        <dbReference type="UniProtKB" id="O75608"/>
    </source>
</evidence>
<evidence type="ECO:0000250" key="2">
    <source>
        <dbReference type="UniProtKB" id="P70470"/>
    </source>
</evidence>
<evidence type="ECO:0000250" key="3">
    <source>
        <dbReference type="UniProtKB" id="P97823"/>
    </source>
</evidence>
<evidence type="ECO:0000305" key="4"/>
<protein>
    <recommendedName>
        <fullName>Acyl-protein thioesterase 1</fullName>
        <shortName>APT-1</shortName>
        <ecNumber>3.1.2.-</ecNumber>
    </recommendedName>
    <alternativeName>
        <fullName>Calcium-independent phospholipase A2</fullName>
        <shortName>CaIPLA2</shortName>
    </alternativeName>
    <alternativeName>
        <fullName>Lysophospholipase 1</fullName>
    </alternativeName>
    <alternativeName>
        <fullName>Lysophospholipase I</fullName>
        <shortName>LPL-I</shortName>
        <shortName>LysoPLA I</shortName>
    </alternativeName>
    <alternativeName>
        <fullName evidence="4">Palmitoyl-protein hydrolase</fullName>
        <ecNumber evidence="1">3.1.2.22</ecNumber>
    </alternativeName>
</protein>